<sequence>MATPLKLYRNIGIAAHVDAGKTTTTERVLYYTGMSHKIGEVHDGAATMDWMVQEQERGITITSAATTCYWSGMDKQFESHRINIIDTPGHVDFMIEVERSLRVLDGAVVVFDSVAGVEPQSETVWRQANKYGVPRIVFVNKMDRMGANFLRVVSQIKQRLGSTPVVLQLPIGAEEEFKGVIDLIKMKAIHWDEENKGMTFKYVDIPADLKSTCEEYRAHIIEAAAEYSEELMEKYLEGEEFTEAEIKKALRHLTITNKVVPVFCGSAFKNKGVQAVLDGVIEYLPSPTDIPDIQGVDEHGDVIHRKTSYDEPFSALAFKIATDPFVGTLTYFRAYSGILKSGDTVYNSVKGKKERIGRLLQMHANSREEIKEVRAGDIAAAVGLKTVTTGDTLCDQDKVVILERMDFPDPVIAVAVEPKTKADQEKMGIALGKLAQEDPSFRVHTDEESGQTIIQGMGELHLEIIVDRMKREFNVEANVGKPQVAYRETLKQAVEQEGKFVRQSGGRGQYGHVWLKIEPQEPGKGYEFINAIVGGVIPKEYIPAVDKGIQEQMQNGVIAGYPVVDVKVTLFDGSFHEVDSSEMAFKIAGSQCFKQGALKAKPVLLEPIMSVEVVTPEDYMGDVMGDLNRRRGLVQGMEDSPAGKIVRAEVPLAEMFGYSTDLRSATQGRATYTMEFCKYAEAPTNIAEAIIKKQ</sequence>
<reference key="1">
    <citation type="journal article" date="2004" name="Science">
        <title>The genomic sequence of the accidental pathogen Legionella pneumophila.</title>
        <authorList>
            <person name="Chien M."/>
            <person name="Morozova I."/>
            <person name="Shi S."/>
            <person name="Sheng H."/>
            <person name="Chen J."/>
            <person name="Gomez S.M."/>
            <person name="Asamani G."/>
            <person name="Hill K."/>
            <person name="Nuara J."/>
            <person name="Feder M."/>
            <person name="Rineer J."/>
            <person name="Greenberg J.J."/>
            <person name="Steshenko V."/>
            <person name="Park S.H."/>
            <person name="Zhao B."/>
            <person name="Teplitskaya E."/>
            <person name="Edwards J.R."/>
            <person name="Pampou S."/>
            <person name="Georghiou A."/>
            <person name="Chou I.-C."/>
            <person name="Iannuccilli W."/>
            <person name="Ulz M.E."/>
            <person name="Kim D.H."/>
            <person name="Geringer-Sameth A."/>
            <person name="Goldsberry C."/>
            <person name="Morozov P."/>
            <person name="Fischer S.G."/>
            <person name="Segal G."/>
            <person name="Qu X."/>
            <person name="Rzhetsky A."/>
            <person name="Zhang P."/>
            <person name="Cayanis E."/>
            <person name="De Jong P.J."/>
            <person name="Ju J."/>
            <person name="Kalachikov S."/>
            <person name="Shuman H.A."/>
            <person name="Russo J.J."/>
        </authorList>
    </citation>
    <scope>NUCLEOTIDE SEQUENCE [LARGE SCALE GENOMIC DNA]</scope>
    <source>
        <strain>Philadelphia 1 / ATCC 33152 / DSM 7513</strain>
    </source>
</reference>
<comment type="function">
    <text evidence="1">Catalyzes the GTP-dependent ribosomal translocation step during translation elongation. During this step, the ribosome changes from the pre-translocational (PRE) to the post-translocational (POST) state as the newly formed A-site-bound peptidyl-tRNA and P-site-bound deacylated tRNA move to the P and E sites, respectively. Catalyzes the coordinated movement of the two tRNA molecules, the mRNA and conformational changes in the ribosome.</text>
</comment>
<comment type="subcellular location">
    <subcellularLocation>
        <location evidence="1">Cytoplasm</location>
    </subcellularLocation>
</comment>
<comment type="similarity">
    <text evidence="1">Belongs to the TRAFAC class translation factor GTPase superfamily. Classic translation factor GTPase family. EF-G/EF-2 subfamily.</text>
</comment>
<accession>Q5ZYP6</accession>
<evidence type="ECO:0000255" key="1">
    <source>
        <dbReference type="HAMAP-Rule" id="MF_00054"/>
    </source>
</evidence>
<evidence type="ECO:0007829" key="2">
    <source>
        <dbReference type="PDB" id="5TY0"/>
    </source>
</evidence>
<proteinExistence type="evidence at protein level"/>
<gene>
    <name evidence="1" type="primary">fusA</name>
    <name type="ordered locus">lpg0326</name>
</gene>
<name>EFG_LEGPH</name>
<protein>
    <recommendedName>
        <fullName evidence="1">Elongation factor G</fullName>
        <shortName evidence="1">EF-G</shortName>
    </recommendedName>
</protein>
<feature type="chain" id="PRO_0000091141" description="Elongation factor G">
    <location>
        <begin position="1"/>
        <end position="694"/>
    </location>
</feature>
<feature type="domain" description="tr-type G">
    <location>
        <begin position="6"/>
        <end position="288"/>
    </location>
</feature>
<feature type="binding site" evidence="1">
    <location>
        <begin position="15"/>
        <end position="22"/>
    </location>
    <ligand>
        <name>GTP</name>
        <dbReference type="ChEBI" id="CHEBI:37565"/>
    </ligand>
</feature>
<feature type="binding site" evidence="1">
    <location>
        <begin position="86"/>
        <end position="90"/>
    </location>
    <ligand>
        <name>GTP</name>
        <dbReference type="ChEBI" id="CHEBI:37565"/>
    </ligand>
</feature>
<feature type="binding site" evidence="1">
    <location>
        <begin position="140"/>
        <end position="143"/>
    </location>
    <ligand>
        <name>GTP</name>
        <dbReference type="ChEBI" id="CHEBI:37565"/>
    </ligand>
</feature>
<feature type="helix" evidence="2">
    <location>
        <begin position="5"/>
        <end position="7"/>
    </location>
</feature>
<feature type="strand" evidence="2">
    <location>
        <begin position="8"/>
        <end position="15"/>
    </location>
</feature>
<feature type="helix" evidence="2">
    <location>
        <begin position="21"/>
        <end position="35"/>
    </location>
</feature>
<feature type="strand" evidence="2">
    <location>
        <begin position="64"/>
        <end position="70"/>
    </location>
</feature>
<feature type="strand" evidence="2">
    <location>
        <begin position="80"/>
        <end position="85"/>
    </location>
</feature>
<feature type="helix" evidence="2">
    <location>
        <begin position="94"/>
        <end position="103"/>
    </location>
</feature>
<feature type="strand" evidence="2">
    <location>
        <begin position="105"/>
        <end position="112"/>
    </location>
</feature>
<feature type="turn" evidence="2">
    <location>
        <begin position="113"/>
        <end position="115"/>
    </location>
</feature>
<feature type="helix" evidence="2">
    <location>
        <begin position="119"/>
        <end position="130"/>
    </location>
</feature>
<feature type="strand" evidence="2">
    <location>
        <begin position="135"/>
        <end position="140"/>
    </location>
</feature>
<feature type="helix" evidence="2">
    <location>
        <begin position="149"/>
        <end position="158"/>
    </location>
</feature>
<feature type="strand" evidence="2">
    <location>
        <begin position="164"/>
        <end position="166"/>
    </location>
</feature>
<feature type="strand" evidence="2">
    <location>
        <begin position="168"/>
        <end position="172"/>
    </location>
</feature>
<feature type="helix" evidence="2">
    <location>
        <begin position="174"/>
        <end position="176"/>
    </location>
</feature>
<feature type="strand" evidence="2">
    <location>
        <begin position="179"/>
        <end position="182"/>
    </location>
</feature>
<feature type="turn" evidence="2">
    <location>
        <begin position="183"/>
        <end position="186"/>
    </location>
</feature>
<feature type="strand" evidence="2">
    <location>
        <begin position="187"/>
        <end position="191"/>
    </location>
</feature>
<feature type="turn" evidence="2">
    <location>
        <begin position="193"/>
        <end position="197"/>
    </location>
</feature>
<feature type="strand" evidence="2">
    <location>
        <begin position="198"/>
        <end position="203"/>
    </location>
</feature>
<feature type="helix" evidence="2">
    <location>
        <begin position="207"/>
        <end position="209"/>
    </location>
</feature>
<feature type="helix" evidence="2">
    <location>
        <begin position="210"/>
        <end position="224"/>
    </location>
</feature>
<feature type="helix" evidence="2">
    <location>
        <begin position="225"/>
        <end position="227"/>
    </location>
</feature>
<feature type="helix" evidence="2">
    <location>
        <begin position="229"/>
        <end position="237"/>
    </location>
</feature>
<feature type="helix" evidence="2">
    <location>
        <begin position="243"/>
        <end position="255"/>
    </location>
</feature>
<feature type="strand" evidence="2">
    <location>
        <begin position="260"/>
        <end position="264"/>
    </location>
</feature>
<feature type="turn" evidence="2">
    <location>
        <begin position="267"/>
        <end position="270"/>
    </location>
</feature>
<feature type="helix" evidence="2">
    <location>
        <begin position="273"/>
        <end position="283"/>
    </location>
</feature>
<feature type="helix" evidence="2">
    <location>
        <begin position="287"/>
        <end position="289"/>
    </location>
</feature>
<feature type="strand" evidence="2">
    <location>
        <begin position="293"/>
        <end position="296"/>
    </location>
</feature>
<feature type="strand" evidence="2">
    <location>
        <begin position="302"/>
        <end position="305"/>
    </location>
</feature>
<feature type="strand" evidence="2">
    <location>
        <begin position="314"/>
        <end position="323"/>
    </location>
</feature>
<feature type="turn" evidence="2">
    <location>
        <begin position="324"/>
        <end position="326"/>
    </location>
</feature>
<feature type="strand" evidence="2">
    <location>
        <begin position="327"/>
        <end position="340"/>
    </location>
</feature>
<feature type="strand" evidence="2">
    <location>
        <begin position="344"/>
        <end position="347"/>
    </location>
</feature>
<feature type="turn" evidence="2">
    <location>
        <begin position="348"/>
        <end position="351"/>
    </location>
</feature>
<feature type="strand" evidence="2">
    <location>
        <begin position="352"/>
        <end position="355"/>
    </location>
</feature>
<feature type="strand" evidence="2">
    <location>
        <begin position="359"/>
        <end position="362"/>
    </location>
</feature>
<feature type="strand" evidence="2">
    <location>
        <begin position="367"/>
        <end position="374"/>
    </location>
</feature>
<feature type="strand" evidence="2">
    <location>
        <begin position="378"/>
        <end position="382"/>
    </location>
</feature>
<feature type="strand" evidence="2">
    <location>
        <begin position="392"/>
        <end position="394"/>
    </location>
</feature>
<keyword id="KW-0002">3D-structure</keyword>
<keyword id="KW-0963">Cytoplasm</keyword>
<keyword id="KW-0251">Elongation factor</keyword>
<keyword id="KW-0342">GTP-binding</keyword>
<keyword id="KW-0547">Nucleotide-binding</keyword>
<keyword id="KW-0648">Protein biosynthesis</keyword>
<keyword id="KW-1185">Reference proteome</keyword>
<dbReference type="EMBL" id="AE017354">
    <property type="protein sequence ID" value="AAU26423.1"/>
    <property type="molecule type" value="Genomic_DNA"/>
</dbReference>
<dbReference type="RefSeq" id="WP_010946076.1">
    <property type="nucleotide sequence ID" value="NC_002942.5"/>
</dbReference>
<dbReference type="RefSeq" id="YP_094370.1">
    <property type="nucleotide sequence ID" value="NC_002942.5"/>
</dbReference>
<dbReference type="PDB" id="5TY0">
    <property type="method" value="X-ray"/>
    <property type="resolution" value="2.22 A"/>
    <property type="chains" value="A=1-419"/>
</dbReference>
<dbReference type="PDBsum" id="5TY0"/>
<dbReference type="SMR" id="Q5ZYP6"/>
<dbReference type="STRING" id="272624.lpg0326"/>
<dbReference type="PaxDb" id="272624-lpg0326"/>
<dbReference type="GeneID" id="57034329"/>
<dbReference type="KEGG" id="lpn:lpg0326"/>
<dbReference type="PATRIC" id="fig|272624.6.peg.333"/>
<dbReference type="eggNOG" id="COG0480">
    <property type="taxonomic scope" value="Bacteria"/>
</dbReference>
<dbReference type="HOGENOM" id="CLU_002794_4_1_6"/>
<dbReference type="OrthoDB" id="9804431at2"/>
<dbReference type="Proteomes" id="UP000000609">
    <property type="component" value="Chromosome"/>
</dbReference>
<dbReference type="GO" id="GO:0005737">
    <property type="term" value="C:cytoplasm"/>
    <property type="evidence" value="ECO:0007669"/>
    <property type="project" value="UniProtKB-SubCell"/>
</dbReference>
<dbReference type="GO" id="GO:0005525">
    <property type="term" value="F:GTP binding"/>
    <property type="evidence" value="ECO:0007669"/>
    <property type="project" value="UniProtKB-UniRule"/>
</dbReference>
<dbReference type="GO" id="GO:0003924">
    <property type="term" value="F:GTPase activity"/>
    <property type="evidence" value="ECO:0007669"/>
    <property type="project" value="InterPro"/>
</dbReference>
<dbReference type="GO" id="GO:0097216">
    <property type="term" value="F:guanosine tetraphosphate binding"/>
    <property type="evidence" value="ECO:0007669"/>
    <property type="project" value="UniProtKB-ARBA"/>
</dbReference>
<dbReference type="GO" id="GO:0003746">
    <property type="term" value="F:translation elongation factor activity"/>
    <property type="evidence" value="ECO:0007669"/>
    <property type="project" value="UniProtKB-UniRule"/>
</dbReference>
<dbReference type="GO" id="GO:0032790">
    <property type="term" value="P:ribosome disassembly"/>
    <property type="evidence" value="ECO:0007669"/>
    <property type="project" value="TreeGrafter"/>
</dbReference>
<dbReference type="CDD" id="cd01886">
    <property type="entry name" value="EF-G"/>
    <property type="match status" value="1"/>
</dbReference>
<dbReference type="CDD" id="cd16262">
    <property type="entry name" value="EFG_III"/>
    <property type="match status" value="1"/>
</dbReference>
<dbReference type="CDD" id="cd01434">
    <property type="entry name" value="EFG_mtEFG1_IV"/>
    <property type="match status" value="1"/>
</dbReference>
<dbReference type="CDD" id="cd03713">
    <property type="entry name" value="EFG_mtEFG_C"/>
    <property type="match status" value="1"/>
</dbReference>
<dbReference type="CDD" id="cd04088">
    <property type="entry name" value="EFG_mtEFG_II"/>
    <property type="match status" value="1"/>
</dbReference>
<dbReference type="FunFam" id="2.40.30.10:FF:000006">
    <property type="entry name" value="Elongation factor G"/>
    <property type="match status" value="1"/>
</dbReference>
<dbReference type="FunFam" id="3.30.230.10:FF:000003">
    <property type="entry name" value="Elongation factor G"/>
    <property type="match status" value="1"/>
</dbReference>
<dbReference type="FunFam" id="3.30.70.240:FF:000001">
    <property type="entry name" value="Elongation factor G"/>
    <property type="match status" value="1"/>
</dbReference>
<dbReference type="FunFam" id="3.30.70.870:FF:000001">
    <property type="entry name" value="Elongation factor G"/>
    <property type="match status" value="1"/>
</dbReference>
<dbReference type="FunFam" id="3.40.50.300:FF:000029">
    <property type="entry name" value="Elongation factor G"/>
    <property type="match status" value="1"/>
</dbReference>
<dbReference type="Gene3D" id="3.30.230.10">
    <property type="match status" value="1"/>
</dbReference>
<dbReference type="Gene3D" id="3.30.70.240">
    <property type="match status" value="1"/>
</dbReference>
<dbReference type="Gene3D" id="3.30.70.870">
    <property type="entry name" value="Elongation Factor G (Translational Gtpase), domain 3"/>
    <property type="match status" value="1"/>
</dbReference>
<dbReference type="Gene3D" id="3.40.50.300">
    <property type="entry name" value="P-loop containing nucleotide triphosphate hydrolases"/>
    <property type="match status" value="1"/>
</dbReference>
<dbReference type="Gene3D" id="2.40.30.10">
    <property type="entry name" value="Translation factors"/>
    <property type="match status" value="1"/>
</dbReference>
<dbReference type="HAMAP" id="MF_00054_B">
    <property type="entry name" value="EF_G_EF_2_B"/>
    <property type="match status" value="1"/>
</dbReference>
<dbReference type="InterPro" id="IPR041095">
    <property type="entry name" value="EFG_II"/>
</dbReference>
<dbReference type="InterPro" id="IPR009022">
    <property type="entry name" value="EFG_III"/>
</dbReference>
<dbReference type="InterPro" id="IPR035647">
    <property type="entry name" value="EFG_III/V"/>
</dbReference>
<dbReference type="InterPro" id="IPR047872">
    <property type="entry name" value="EFG_IV"/>
</dbReference>
<dbReference type="InterPro" id="IPR035649">
    <property type="entry name" value="EFG_V"/>
</dbReference>
<dbReference type="InterPro" id="IPR000640">
    <property type="entry name" value="EFG_V-like"/>
</dbReference>
<dbReference type="InterPro" id="IPR004161">
    <property type="entry name" value="EFTu-like_2"/>
</dbReference>
<dbReference type="InterPro" id="IPR031157">
    <property type="entry name" value="G_TR_CS"/>
</dbReference>
<dbReference type="InterPro" id="IPR027417">
    <property type="entry name" value="P-loop_NTPase"/>
</dbReference>
<dbReference type="InterPro" id="IPR020568">
    <property type="entry name" value="Ribosomal_Su5_D2-typ_SF"/>
</dbReference>
<dbReference type="InterPro" id="IPR014721">
    <property type="entry name" value="Ribsml_uS5_D2-typ_fold_subgr"/>
</dbReference>
<dbReference type="InterPro" id="IPR005225">
    <property type="entry name" value="Small_GTP-bd"/>
</dbReference>
<dbReference type="InterPro" id="IPR000795">
    <property type="entry name" value="T_Tr_GTP-bd_dom"/>
</dbReference>
<dbReference type="InterPro" id="IPR009000">
    <property type="entry name" value="Transl_B-barrel_sf"/>
</dbReference>
<dbReference type="InterPro" id="IPR004540">
    <property type="entry name" value="Transl_elong_EFG/EF2"/>
</dbReference>
<dbReference type="InterPro" id="IPR005517">
    <property type="entry name" value="Transl_elong_EFG/EF2_IV"/>
</dbReference>
<dbReference type="NCBIfam" id="TIGR00484">
    <property type="entry name" value="EF-G"/>
    <property type="match status" value="1"/>
</dbReference>
<dbReference type="NCBIfam" id="NF009379">
    <property type="entry name" value="PRK12740.1-3"/>
    <property type="match status" value="1"/>
</dbReference>
<dbReference type="NCBIfam" id="NF009381">
    <property type="entry name" value="PRK12740.1-5"/>
    <property type="match status" value="1"/>
</dbReference>
<dbReference type="NCBIfam" id="TIGR00231">
    <property type="entry name" value="small_GTP"/>
    <property type="match status" value="1"/>
</dbReference>
<dbReference type="PANTHER" id="PTHR43261:SF1">
    <property type="entry name" value="RIBOSOME-RELEASING FACTOR 2, MITOCHONDRIAL"/>
    <property type="match status" value="1"/>
</dbReference>
<dbReference type="PANTHER" id="PTHR43261">
    <property type="entry name" value="TRANSLATION ELONGATION FACTOR G-RELATED"/>
    <property type="match status" value="1"/>
</dbReference>
<dbReference type="Pfam" id="PF00679">
    <property type="entry name" value="EFG_C"/>
    <property type="match status" value="1"/>
</dbReference>
<dbReference type="Pfam" id="PF14492">
    <property type="entry name" value="EFG_III"/>
    <property type="match status" value="1"/>
</dbReference>
<dbReference type="Pfam" id="PF03764">
    <property type="entry name" value="EFG_IV"/>
    <property type="match status" value="1"/>
</dbReference>
<dbReference type="Pfam" id="PF00009">
    <property type="entry name" value="GTP_EFTU"/>
    <property type="match status" value="1"/>
</dbReference>
<dbReference type="Pfam" id="PF03144">
    <property type="entry name" value="GTP_EFTU_D2"/>
    <property type="match status" value="1"/>
</dbReference>
<dbReference type="PRINTS" id="PR00315">
    <property type="entry name" value="ELONGATNFCT"/>
</dbReference>
<dbReference type="SMART" id="SM00838">
    <property type="entry name" value="EFG_C"/>
    <property type="match status" value="1"/>
</dbReference>
<dbReference type="SMART" id="SM00889">
    <property type="entry name" value="EFG_IV"/>
    <property type="match status" value="1"/>
</dbReference>
<dbReference type="SUPFAM" id="SSF54980">
    <property type="entry name" value="EF-G C-terminal domain-like"/>
    <property type="match status" value="2"/>
</dbReference>
<dbReference type="SUPFAM" id="SSF52540">
    <property type="entry name" value="P-loop containing nucleoside triphosphate hydrolases"/>
    <property type="match status" value="1"/>
</dbReference>
<dbReference type="SUPFAM" id="SSF54211">
    <property type="entry name" value="Ribosomal protein S5 domain 2-like"/>
    <property type="match status" value="1"/>
</dbReference>
<dbReference type="SUPFAM" id="SSF50447">
    <property type="entry name" value="Translation proteins"/>
    <property type="match status" value="1"/>
</dbReference>
<dbReference type="PROSITE" id="PS00301">
    <property type="entry name" value="G_TR_1"/>
    <property type="match status" value="1"/>
</dbReference>
<dbReference type="PROSITE" id="PS51722">
    <property type="entry name" value="G_TR_2"/>
    <property type="match status" value="1"/>
</dbReference>
<organism>
    <name type="scientific">Legionella pneumophila subsp. pneumophila (strain Philadelphia 1 / ATCC 33152 / DSM 7513)</name>
    <dbReference type="NCBI Taxonomy" id="272624"/>
    <lineage>
        <taxon>Bacteria</taxon>
        <taxon>Pseudomonadati</taxon>
        <taxon>Pseudomonadota</taxon>
        <taxon>Gammaproteobacteria</taxon>
        <taxon>Legionellales</taxon>
        <taxon>Legionellaceae</taxon>
        <taxon>Legionella</taxon>
    </lineage>
</organism>